<organism>
    <name type="scientific">Levilactobacillus brevis (strain ATCC 367 / BCRC 12310 / CIP 105137 / JCM 1170 / LMG 11437 / NCIMB 947 / NCTC 947)</name>
    <name type="common">Lactobacillus brevis</name>
    <dbReference type="NCBI Taxonomy" id="387344"/>
    <lineage>
        <taxon>Bacteria</taxon>
        <taxon>Bacillati</taxon>
        <taxon>Bacillota</taxon>
        <taxon>Bacilli</taxon>
        <taxon>Lactobacillales</taxon>
        <taxon>Lactobacillaceae</taxon>
        <taxon>Levilactobacillus</taxon>
    </lineage>
</organism>
<accession>Q03T19</accession>
<sequence>MKQGIHPDYREVVFQDSSTGFQFLSGSTATSDETVEWEDGNTYPLIRVEITSDSHPFYTGKQKFTQADGAVDRFNKKYGLSND</sequence>
<comment type="subunit">
    <text evidence="1">Part of the 50S ribosomal subunit.</text>
</comment>
<comment type="similarity">
    <text evidence="1">Belongs to the bacterial ribosomal protein bL31 family. Type B subfamily.</text>
</comment>
<name>RL31B_LEVBA</name>
<reference key="1">
    <citation type="journal article" date="2006" name="Proc. Natl. Acad. Sci. U.S.A.">
        <title>Comparative genomics of the lactic acid bacteria.</title>
        <authorList>
            <person name="Makarova K.S."/>
            <person name="Slesarev A."/>
            <person name="Wolf Y.I."/>
            <person name="Sorokin A."/>
            <person name="Mirkin B."/>
            <person name="Koonin E.V."/>
            <person name="Pavlov A."/>
            <person name="Pavlova N."/>
            <person name="Karamychev V."/>
            <person name="Polouchine N."/>
            <person name="Shakhova V."/>
            <person name="Grigoriev I."/>
            <person name="Lou Y."/>
            <person name="Rohksar D."/>
            <person name="Lucas S."/>
            <person name="Huang K."/>
            <person name="Goodstein D.M."/>
            <person name="Hawkins T."/>
            <person name="Plengvidhya V."/>
            <person name="Welker D."/>
            <person name="Hughes J."/>
            <person name="Goh Y."/>
            <person name="Benson A."/>
            <person name="Baldwin K."/>
            <person name="Lee J.-H."/>
            <person name="Diaz-Muniz I."/>
            <person name="Dosti B."/>
            <person name="Smeianov V."/>
            <person name="Wechter W."/>
            <person name="Barabote R."/>
            <person name="Lorca G."/>
            <person name="Altermann E."/>
            <person name="Barrangou R."/>
            <person name="Ganesan B."/>
            <person name="Xie Y."/>
            <person name="Rawsthorne H."/>
            <person name="Tamir D."/>
            <person name="Parker C."/>
            <person name="Breidt F."/>
            <person name="Broadbent J.R."/>
            <person name="Hutkins R."/>
            <person name="O'Sullivan D."/>
            <person name="Steele J."/>
            <person name="Unlu G."/>
            <person name="Saier M.H. Jr."/>
            <person name="Klaenhammer T."/>
            <person name="Richardson P."/>
            <person name="Kozyavkin S."/>
            <person name="Weimer B.C."/>
            <person name="Mills D.A."/>
        </authorList>
    </citation>
    <scope>NUCLEOTIDE SEQUENCE [LARGE SCALE GENOMIC DNA]</scope>
    <source>
        <strain>ATCC 367 / BCRC 12310 / CIP 105137 / JCM 1170 / LMG 11437 / NCIMB 947 / NCTC 947</strain>
    </source>
</reference>
<keyword id="KW-1185">Reference proteome</keyword>
<keyword id="KW-0687">Ribonucleoprotein</keyword>
<keyword id="KW-0689">Ribosomal protein</keyword>
<protein>
    <recommendedName>
        <fullName evidence="1">Large ribosomal subunit protein bL31B</fullName>
    </recommendedName>
    <alternativeName>
        <fullName evidence="2">50S ribosomal protein L31 type B</fullName>
    </alternativeName>
</protein>
<gene>
    <name evidence="1" type="primary">rpmE2</name>
    <name type="ordered locus">LVIS_0495</name>
</gene>
<evidence type="ECO:0000255" key="1">
    <source>
        <dbReference type="HAMAP-Rule" id="MF_00502"/>
    </source>
</evidence>
<evidence type="ECO:0000305" key="2"/>
<feature type="chain" id="PRO_1000014699" description="Large ribosomal subunit protein bL31B">
    <location>
        <begin position="1"/>
        <end position="83"/>
    </location>
</feature>
<dbReference type="EMBL" id="CP000416">
    <property type="protein sequence ID" value="ABJ63653.1"/>
    <property type="molecule type" value="Genomic_DNA"/>
</dbReference>
<dbReference type="RefSeq" id="WP_011667279.1">
    <property type="nucleotide sequence ID" value="NC_008497.1"/>
</dbReference>
<dbReference type="SMR" id="Q03T19"/>
<dbReference type="STRING" id="387344.LVIS_0495"/>
<dbReference type="KEGG" id="lbr:LVIS_0495"/>
<dbReference type="eggNOG" id="COG0254">
    <property type="taxonomic scope" value="Bacteria"/>
</dbReference>
<dbReference type="HOGENOM" id="CLU_114306_2_2_9"/>
<dbReference type="Proteomes" id="UP000001652">
    <property type="component" value="Chromosome"/>
</dbReference>
<dbReference type="GO" id="GO:1990904">
    <property type="term" value="C:ribonucleoprotein complex"/>
    <property type="evidence" value="ECO:0007669"/>
    <property type="project" value="UniProtKB-KW"/>
</dbReference>
<dbReference type="GO" id="GO:0005840">
    <property type="term" value="C:ribosome"/>
    <property type="evidence" value="ECO:0007669"/>
    <property type="project" value="UniProtKB-KW"/>
</dbReference>
<dbReference type="GO" id="GO:0003735">
    <property type="term" value="F:structural constituent of ribosome"/>
    <property type="evidence" value="ECO:0007669"/>
    <property type="project" value="InterPro"/>
</dbReference>
<dbReference type="GO" id="GO:0006412">
    <property type="term" value="P:translation"/>
    <property type="evidence" value="ECO:0007669"/>
    <property type="project" value="UniProtKB-UniRule"/>
</dbReference>
<dbReference type="Gene3D" id="4.10.830.30">
    <property type="entry name" value="Ribosomal protein L31"/>
    <property type="match status" value="1"/>
</dbReference>
<dbReference type="HAMAP" id="MF_00502">
    <property type="entry name" value="Ribosomal_bL31_2"/>
    <property type="match status" value="1"/>
</dbReference>
<dbReference type="InterPro" id="IPR034704">
    <property type="entry name" value="Ribosomal_bL28/bL31-like_sf"/>
</dbReference>
<dbReference type="InterPro" id="IPR002150">
    <property type="entry name" value="Ribosomal_bL31"/>
</dbReference>
<dbReference type="InterPro" id="IPR027493">
    <property type="entry name" value="Ribosomal_bL31_B"/>
</dbReference>
<dbReference type="InterPro" id="IPR042105">
    <property type="entry name" value="Ribosomal_bL31_sf"/>
</dbReference>
<dbReference type="NCBIfam" id="TIGR00105">
    <property type="entry name" value="L31"/>
    <property type="match status" value="1"/>
</dbReference>
<dbReference type="NCBIfam" id="NF002462">
    <property type="entry name" value="PRK01678.1"/>
    <property type="match status" value="1"/>
</dbReference>
<dbReference type="PANTHER" id="PTHR33280">
    <property type="entry name" value="50S RIBOSOMAL PROTEIN L31, CHLOROPLASTIC"/>
    <property type="match status" value="1"/>
</dbReference>
<dbReference type="PANTHER" id="PTHR33280:SF1">
    <property type="entry name" value="LARGE RIBOSOMAL SUBUNIT PROTEIN BL31C"/>
    <property type="match status" value="1"/>
</dbReference>
<dbReference type="Pfam" id="PF01197">
    <property type="entry name" value="Ribosomal_L31"/>
    <property type="match status" value="1"/>
</dbReference>
<dbReference type="PRINTS" id="PR01249">
    <property type="entry name" value="RIBOSOMALL31"/>
</dbReference>
<dbReference type="SUPFAM" id="SSF143800">
    <property type="entry name" value="L28p-like"/>
    <property type="match status" value="1"/>
</dbReference>
<proteinExistence type="inferred from homology"/>